<accession>A4TGY5</accession>
<gene>
    <name evidence="1" type="primary">rpsG</name>
    <name type="ordered locus">YPDSF_0126</name>
</gene>
<protein>
    <recommendedName>
        <fullName evidence="1">Small ribosomal subunit protein uS7</fullName>
    </recommendedName>
    <alternativeName>
        <fullName evidence="2">30S ribosomal protein S7</fullName>
    </alternativeName>
</protein>
<name>RS7_YERPP</name>
<organism>
    <name type="scientific">Yersinia pestis (strain Pestoides F)</name>
    <dbReference type="NCBI Taxonomy" id="386656"/>
    <lineage>
        <taxon>Bacteria</taxon>
        <taxon>Pseudomonadati</taxon>
        <taxon>Pseudomonadota</taxon>
        <taxon>Gammaproteobacteria</taxon>
        <taxon>Enterobacterales</taxon>
        <taxon>Yersiniaceae</taxon>
        <taxon>Yersinia</taxon>
    </lineage>
</organism>
<keyword id="KW-0687">Ribonucleoprotein</keyword>
<keyword id="KW-0689">Ribosomal protein</keyword>
<keyword id="KW-0694">RNA-binding</keyword>
<keyword id="KW-0699">rRNA-binding</keyword>
<keyword id="KW-0820">tRNA-binding</keyword>
<sequence>MPRRRVIGQRKILPDPKFGSELLAKFVNILMVDGKKSTAEAIVYTALETLAQRSGKDFLEAFEVALDNVRPTVEVKSRRVGGSTYQVPVEVRPVRRNALAMRWIVDAARKRGDKSMALRLANELSDAAENKGSAVKKREDVHRMAEANKAFAHYRW</sequence>
<comment type="function">
    <text evidence="1">One of the primary rRNA binding proteins, it binds directly to 16S rRNA where it nucleates assembly of the head domain of the 30S subunit. Is located at the subunit interface close to the decoding center, probably blocks exit of the E-site tRNA.</text>
</comment>
<comment type="subunit">
    <text evidence="1">Part of the 30S ribosomal subunit. Contacts proteins S9 and S11.</text>
</comment>
<comment type="similarity">
    <text evidence="1">Belongs to the universal ribosomal protein uS7 family.</text>
</comment>
<dbReference type="EMBL" id="CP000668">
    <property type="protein sequence ID" value="ABP38548.1"/>
    <property type="molecule type" value="Genomic_DNA"/>
</dbReference>
<dbReference type="RefSeq" id="WP_002212324.1">
    <property type="nucleotide sequence ID" value="NZ_CP009715.1"/>
</dbReference>
<dbReference type="SMR" id="A4TGY5"/>
<dbReference type="GeneID" id="97454225"/>
<dbReference type="KEGG" id="ypp:YPDSF_0126"/>
<dbReference type="PATRIC" id="fig|386656.14.peg.441"/>
<dbReference type="GO" id="GO:0015935">
    <property type="term" value="C:small ribosomal subunit"/>
    <property type="evidence" value="ECO:0007669"/>
    <property type="project" value="InterPro"/>
</dbReference>
<dbReference type="GO" id="GO:0019843">
    <property type="term" value="F:rRNA binding"/>
    <property type="evidence" value="ECO:0007669"/>
    <property type="project" value="UniProtKB-UniRule"/>
</dbReference>
<dbReference type="GO" id="GO:0003735">
    <property type="term" value="F:structural constituent of ribosome"/>
    <property type="evidence" value="ECO:0007669"/>
    <property type="project" value="InterPro"/>
</dbReference>
<dbReference type="GO" id="GO:0000049">
    <property type="term" value="F:tRNA binding"/>
    <property type="evidence" value="ECO:0007669"/>
    <property type="project" value="UniProtKB-UniRule"/>
</dbReference>
<dbReference type="GO" id="GO:0006412">
    <property type="term" value="P:translation"/>
    <property type="evidence" value="ECO:0007669"/>
    <property type="project" value="UniProtKB-UniRule"/>
</dbReference>
<dbReference type="CDD" id="cd14869">
    <property type="entry name" value="uS7_Bacteria"/>
    <property type="match status" value="1"/>
</dbReference>
<dbReference type="FunFam" id="1.10.455.10:FF:000001">
    <property type="entry name" value="30S ribosomal protein S7"/>
    <property type="match status" value="1"/>
</dbReference>
<dbReference type="Gene3D" id="1.10.455.10">
    <property type="entry name" value="Ribosomal protein S7 domain"/>
    <property type="match status" value="1"/>
</dbReference>
<dbReference type="HAMAP" id="MF_00480_B">
    <property type="entry name" value="Ribosomal_uS7_B"/>
    <property type="match status" value="1"/>
</dbReference>
<dbReference type="InterPro" id="IPR000235">
    <property type="entry name" value="Ribosomal_uS7"/>
</dbReference>
<dbReference type="InterPro" id="IPR005717">
    <property type="entry name" value="Ribosomal_uS7_bac/org-type"/>
</dbReference>
<dbReference type="InterPro" id="IPR020606">
    <property type="entry name" value="Ribosomal_uS7_CS"/>
</dbReference>
<dbReference type="InterPro" id="IPR023798">
    <property type="entry name" value="Ribosomal_uS7_dom"/>
</dbReference>
<dbReference type="InterPro" id="IPR036823">
    <property type="entry name" value="Ribosomal_uS7_dom_sf"/>
</dbReference>
<dbReference type="NCBIfam" id="TIGR01029">
    <property type="entry name" value="rpsG_bact"/>
    <property type="match status" value="1"/>
</dbReference>
<dbReference type="PANTHER" id="PTHR11205">
    <property type="entry name" value="RIBOSOMAL PROTEIN S7"/>
    <property type="match status" value="1"/>
</dbReference>
<dbReference type="Pfam" id="PF00177">
    <property type="entry name" value="Ribosomal_S7"/>
    <property type="match status" value="1"/>
</dbReference>
<dbReference type="PIRSF" id="PIRSF002122">
    <property type="entry name" value="RPS7p_RPS7a_RPS5e_RPS7o"/>
    <property type="match status" value="1"/>
</dbReference>
<dbReference type="SUPFAM" id="SSF47973">
    <property type="entry name" value="Ribosomal protein S7"/>
    <property type="match status" value="1"/>
</dbReference>
<dbReference type="PROSITE" id="PS00052">
    <property type="entry name" value="RIBOSOMAL_S7"/>
    <property type="match status" value="1"/>
</dbReference>
<feature type="chain" id="PRO_1000014323" description="Small ribosomal subunit protein uS7">
    <location>
        <begin position="1"/>
        <end position="156"/>
    </location>
</feature>
<evidence type="ECO:0000255" key="1">
    <source>
        <dbReference type="HAMAP-Rule" id="MF_00480"/>
    </source>
</evidence>
<evidence type="ECO:0000305" key="2"/>
<proteinExistence type="inferred from homology"/>
<reference key="1">
    <citation type="submission" date="2007-02" db="EMBL/GenBank/DDBJ databases">
        <title>Complete sequence of chromosome of Yersinia pestis Pestoides F.</title>
        <authorList>
            <consortium name="US DOE Joint Genome Institute"/>
            <person name="Copeland A."/>
            <person name="Lucas S."/>
            <person name="Lapidus A."/>
            <person name="Barry K."/>
            <person name="Detter J.C."/>
            <person name="Glavina del Rio T."/>
            <person name="Hammon N."/>
            <person name="Israni S."/>
            <person name="Dalin E."/>
            <person name="Tice H."/>
            <person name="Pitluck S."/>
            <person name="Di Bartolo G."/>
            <person name="Chain P."/>
            <person name="Malfatti S."/>
            <person name="Shin M."/>
            <person name="Vergez L."/>
            <person name="Schmutz J."/>
            <person name="Larimer F."/>
            <person name="Land M."/>
            <person name="Hauser L."/>
            <person name="Worsham P."/>
            <person name="Chu M."/>
            <person name="Bearden S."/>
            <person name="Garcia E."/>
            <person name="Richardson P."/>
        </authorList>
    </citation>
    <scope>NUCLEOTIDE SEQUENCE [LARGE SCALE GENOMIC DNA]</scope>
    <source>
        <strain>Pestoides F</strain>
    </source>
</reference>